<feature type="signal peptide" evidence="4">
    <location>
        <begin position="1"/>
        <end position="20"/>
    </location>
</feature>
<feature type="chain" id="PRO_0000032507" description="Pigment epithelium-derived factor">
    <location>
        <begin position="21"/>
        <end position="416"/>
    </location>
</feature>
<feature type="modified residue" description="Phosphoserine" evidence="2">
    <location>
        <position position="112"/>
    </location>
</feature>
<feature type="modified residue" description="Phosphoserine" evidence="2">
    <location>
        <position position="225"/>
    </location>
</feature>
<feature type="glycosylation site" description="N-linked (GlcNAc...) asparagine" evidence="3">
    <location>
        <position position="283"/>
    </location>
</feature>
<feature type="sequence conflict" description="In Ref. 4; AA sequence." evidence="5" ref="4">
    <original>N</original>
    <variation>D</variation>
    <location>
        <position position="21"/>
    </location>
</feature>
<feature type="sequence conflict" description="In Ref. 4; AA sequence." evidence="5" ref="4">
    <original>K</original>
    <variation>R</variation>
    <location>
        <position position="46"/>
    </location>
</feature>
<sequence>MQALVLLLWTGALLGFGRCQNAGQEAGSLTPESTGAPVEEEDPFFKVPVNKLAAAVSNFGYDLYRVRSGESPTANVLLSPLSVATALSALSLGAEQRTESNIHRALYYDLISNPDIHGTYKDLLASVTAPQKNLKSASRIIFERKLRIKASFIPPLEKSYGTRPRILTGNSRVDLQEINNWVQAQMKGKVARSTREMPSEISIFLLGVAYFKGQWVTKFDSRKTSLEDFYLDEERTVKVPMMSDPQAVLRYGLDSDLNCKIAQLPLTGSTSIIFFLPQKVTQNLTLIEESLTSEFIHDIDRELKTVQAVLTIPKLKLSYEGELTKSVQELKLQSLFDAPDFSKITGKPIKLTQVEHRVGFEWNEDGAGTNSSPGVQPARLTFPLDYHLNQPFIFVLRDTDTGALLFIGKILDPRGT</sequence>
<name>PEDF_BOVIN</name>
<proteinExistence type="evidence at protein level"/>
<reference key="1">
    <citation type="submission" date="1996-11" db="EMBL/GenBank/DDBJ databases">
        <authorList>
            <person name="Perez-Mediavilla L."/>
            <person name="Chew C."/>
            <person name="Campochiaro P."/>
            <person name="Zack D.J."/>
            <person name="Becerra S.P."/>
        </authorList>
    </citation>
    <scope>NUCLEOTIDE SEQUENCE [MRNA]</scope>
    <source>
        <tissue>Retinal pigment epithelium</tissue>
    </source>
</reference>
<reference key="2">
    <citation type="submission" date="1997-08" db="EMBL/GenBank/DDBJ databases">
        <authorList>
            <person name="Singh V.K."/>
            <person name="Chader G.J."/>
            <person name="Rodriguez I.R."/>
        </authorList>
    </citation>
    <scope>NUCLEOTIDE SEQUENCE [MRNA]</scope>
</reference>
<reference key="3">
    <citation type="submission" date="2006-01" db="EMBL/GenBank/DDBJ databases">
        <authorList>
            <consortium name="NIH - Mammalian Gene Collection (MGC) project"/>
        </authorList>
    </citation>
    <scope>NUCLEOTIDE SEQUENCE [LARGE SCALE MRNA]</scope>
    <source>
        <strain>Hereford</strain>
        <tissue>Testis</tissue>
    </source>
</reference>
<reference key="4">
    <citation type="journal article" date="1995" name="J. Biol. Chem.">
        <title>Pigment epithelium-derived factor behaves like a noninhibitory serpin. Neurotrophic activity does not require the serpin reactive loop.</title>
        <authorList>
            <person name="Becerra S.P."/>
            <person name="Sagasti A."/>
            <person name="Spinella P."/>
            <person name="Notario V."/>
        </authorList>
    </citation>
    <scope>PROTEIN SEQUENCE OF 21-47 AND 380-399</scope>
    <source>
        <tissue>Eye</tissue>
    </source>
</reference>
<evidence type="ECO:0000250" key="1"/>
<evidence type="ECO:0000250" key="2">
    <source>
        <dbReference type="UniProtKB" id="P36955"/>
    </source>
</evidence>
<evidence type="ECO:0000255" key="3"/>
<evidence type="ECO:0000269" key="4">
    <source>
    </source>
</evidence>
<evidence type="ECO:0000305" key="5"/>
<organism>
    <name type="scientific">Bos taurus</name>
    <name type="common">Bovine</name>
    <dbReference type="NCBI Taxonomy" id="9913"/>
    <lineage>
        <taxon>Eukaryota</taxon>
        <taxon>Metazoa</taxon>
        <taxon>Chordata</taxon>
        <taxon>Craniata</taxon>
        <taxon>Vertebrata</taxon>
        <taxon>Euteleostomi</taxon>
        <taxon>Mammalia</taxon>
        <taxon>Eutheria</taxon>
        <taxon>Laurasiatheria</taxon>
        <taxon>Artiodactyla</taxon>
        <taxon>Ruminantia</taxon>
        <taxon>Pecora</taxon>
        <taxon>Bovidae</taxon>
        <taxon>Bovinae</taxon>
        <taxon>Bos</taxon>
    </lineage>
</organism>
<keyword id="KW-0903">Direct protein sequencing</keyword>
<keyword id="KW-0325">Glycoprotein</keyword>
<keyword id="KW-0597">Phosphoprotein</keyword>
<keyword id="KW-1185">Reference proteome</keyword>
<keyword id="KW-0964">Secreted</keyword>
<keyword id="KW-0732">Signal</keyword>
<gene>
    <name type="primary">SERPINF1</name>
    <name type="synonym">PEDF</name>
</gene>
<dbReference type="EMBL" id="U48229">
    <property type="protein sequence ID" value="AAC48856.1"/>
    <property type="molecule type" value="mRNA"/>
</dbReference>
<dbReference type="EMBL" id="AF017058">
    <property type="protein sequence ID" value="AAC05732.1"/>
    <property type="molecule type" value="mRNA"/>
</dbReference>
<dbReference type="EMBL" id="BC112656">
    <property type="protein sequence ID" value="AAI12657.1"/>
    <property type="molecule type" value="mRNA"/>
</dbReference>
<dbReference type="RefSeq" id="NP_776565.1">
    <property type="nucleotide sequence ID" value="NM_174140.3"/>
</dbReference>
<dbReference type="SMR" id="Q95121"/>
<dbReference type="FunCoup" id="Q95121">
    <property type="interactions" value="295"/>
</dbReference>
<dbReference type="STRING" id="9913.ENSBTAP00000012804"/>
<dbReference type="MEROPS" id="I04.979"/>
<dbReference type="GlyCosmos" id="Q95121">
    <property type="glycosylation" value="1 site, No reported glycans"/>
</dbReference>
<dbReference type="GlyGen" id="Q95121">
    <property type="glycosylation" value="1 site"/>
</dbReference>
<dbReference type="PaxDb" id="9913-ENSBTAP00000012804"/>
<dbReference type="PeptideAtlas" id="Q95121"/>
<dbReference type="Ensembl" id="ENSBTAT00000012804.6">
    <property type="protein sequence ID" value="ENSBTAP00000012804.5"/>
    <property type="gene ID" value="ENSBTAG00000009705.7"/>
</dbReference>
<dbReference type="GeneID" id="281386"/>
<dbReference type="KEGG" id="bta:281386"/>
<dbReference type="CTD" id="5176"/>
<dbReference type="VEuPathDB" id="HostDB:ENSBTAG00000009705"/>
<dbReference type="VGNC" id="VGNC:34478">
    <property type="gene designation" value="SERPINF1"/>
</dbReference>
<dbReference type="eggNOG" id="KOG2392">
    <property type="taxonomic scope" value="Eukaryota"/>
</dbReference>
<dbReference type="GeneTree" id="ENSGT00940000158112"/>
<dbReference type="HOGENOM" id="CLU_023330_3_1_1"/>
<dbReference type="InParanoid" id="Q95121"/>
<dbReference type="OMA" id="QEVNNWV"/>
<dbReference type="OrthoDB" id="62495at2759"/>
<dbReference type="TreeFam" id="TF317350"/>
<dbReference type="Proteomes" id="UP000009136">
    <property type="component" value="Chromosome 19"/>
</dbReference>
<dbReference type="Bgee" id="ENSBTAG00000009705">
    <property type="expression patterns" value="Expressed in liver and 104 other cell types or tissues"/>
</dbReference>
<dbReference type="GO" id="GO:0005576">
    <property type="term" value="C:extracellular region"/>
    <property type="evidence" value="ECO:0000314"/>
    <property type="project" value="UniProtKB"/>
</dbReference>
<dbReference type="GO" id="GO:0005615">
    <property type="term" value="C:extracellular space"/>
    <property type="evidence" value="ECO:0000318"/>
    <property type="project" value="GO_Central"/>
</dbReference>
<dbReference type="GO" id="GO:0042470">
    <property type="term" value="C:melanosome"/>
    <property type="evidence" value="ECO:0007669"/>
    <property type="project" value="UniProtKB-SubCell"/>
</dbReference>
<dbReference type="GO" id="GO:0004867">
    <property type="term" value="F:serine-type endopeptidase inhibitor activity"/>
    <property type="evidence" value="ECO:0000318"/>
    <property type="project" value="GO_Central"/>
</dbReference>
<dbReference type="GO" id="GO:0016525">
    <property type="term" value="P:negative regulation of angiogenesis"/>
    <property type="evidence" value="ECO:0000318"/>
    <property type="project" value="GO_Central"/>
</dbReference>
<dbReference type="GO" id="GO:0050769">
    <property type="term" value="P:positive regulation of neurogenesis"/>
    <property type="evidence" value="ECO:0000250"/>
    <property type="project" value="UniProtKB"/>
</dbReference>
<dbReference type="CDD" id="cd02052">
    <property type="entry name" value="serpinF1_PEDF"/>
    <property type="match status" value="1"/>
</dbReference>
<dbReference type="FunFam" id="3.30.497.10:FF:000003">
    <property type="entry name" value="Serpin family F member 1"/>
    <property type="match status" value="1"/>
</dbReference>
<dbReference type="Gene3D" id="2.30.39.10">
    <property type="entry name" value="Alpha-1-antitrypsin, domain 1"/>
    <property type="match status" value="1"/>
</dbReference>
<dbReference type="Gene3D" id="3.30.497.10">
    <property type="entry name" value="Antithrombin, subunit I, domain 2"/>
    <property type="match status" value="1"/>
</dbReference>
<dbReference type="InterPro" id="IPR033832">
    <property type="entry name" value="PEDF_serpin_dom"/>
</dbReference>
<dbReference type="InterPro" id="IPR023795">
    <property type="entry name" value="Serpin_CS"/>
</dbReference>
<dbReference type="InterPro" id="IPR023796">
    <property type="entry name" value="Serpin_dom"/>
</dbReference>
<dbReference type="InterPro" id="IPR000215">
    <property type="entry name" value="Serpin_fam"/>
</dbReference>
<dbReference type="InterPro" id="IPR036186">
    <property type="entry name" value="Serpin_sf"/>
</dbReference>
<dbReference type="InterPro" id="IPR042178">
    <property type="entry name" value="Serpin_sf_1"/>
</dbReference>
<dbReference type="InterPro" id="IPR042185">
    <property type="entry name" value="Serpin_sf_2"/>
</dbReference>
<dbReference type="PANTHER" id="PTHR11461:SF84">
    <property type="entry name" value="PIGMENT EPITHELIUM-DERIVED FACTOR"/>
    <property type="match status" value="1"/>
</dbReference>
<dbReference type="PANTHER" id="PTHR11461">
    <property type="entry name" value="SERINE PROTEASE INHIBITOR, SERPIN"/>
    <property type="match status" value="1"/>
</dbReference>
<dbReference type="Pfam" id="PF00079">
    <property type="entry name" value="Serpin"/>
    <property type="match status" value="1"/>
</dbReference>
<dbReference type="SMART" id="SM00093">
    <property type="entry name" value="SERPIN"/>
    <property type="match status" value="1"/>
</dbReference>
<dbReference type="SUPFAM" id="SSF56574">
    <property type="entry name" value="Serpins"/>
    <property type="match status" value="1"/>
</dbReference>
<dbReference type="PROSITE" id="PS00284">
    <property type="entry name" value="SERPIN"/>
    <property type="match status" value="1"/>
</dbReference>
<comment type="function">
    <text>Neurotrophic protein; induces extensive neuronal differentiation in retinoblastoma cells. Potent inhibitor of angiogenesis. As it does not undergo the S (stressed) to R (relaxed) conformational transition characteristic of active serpins, it exhibits no serine protease inhibitory activity.</text>
</comment>
<comment type="subunit">
    <text evidence="2">Interacts with PNPLA2; this interaction stimulates the phospholipase A2 activity of PNPLA2.</text>
</comment>
<comment type="subcellular location">
    <subcellularLocation>
        <location>Secreted</location>
    </subcellularLocation>
    <subcellularLocation>
        <location evidence="1">Melanosome</location>
    </subcellularLocation>
</comment>
<comment type="tissue specificity">
    <text>Retinal pigment epithelial cells. Located in the interphotoreceptor matrix (IPM) which is between the retinal pigment epithelium and the neural retina.</text>
</comment>
<comment type="domain">
    <text>The N-terminal (AA 42-139) exhibits neurite outgrowth-inducing activity. The C-terminal exposed loop (AA 380-416) is essential for serpin activity.</text>
</comment>
<comment type="similarity">
    <text evidence="5">Belongs to the serpin family.</text>
</comment>
<protein>
    <recommendedName>
        <fullName>Pigment epithelium-derived factor</fullName>
        <shortName>PEDF</shortName>
    </recommendedName>
    <alternativeName>
        <fullName>Serpin F1</fullName>
    </alternativeName>
</protein>
<accession>Q95121</accession>
<accession>Q2KIF6</accession>